<protein>
    <recommendedName>
        <fullName evidence="1">Protein E6</fullName>
    </recommendedName>
</protein>
<organism>
    <name type="scientific">Human papillomavirus 7</name>
    <dbReference type="NCBI Taxonomy" id="10620"/>
    <lineage>
        <taxon>Viruses</taxon>
        <taxon>Monodnaviria</taxon>
        <taxon>Shotokuvirae</taxon>
        <taxon>Cossaviricota</taxon>
        <taxon>Papovaviricetes</taxon>
        <taxon>Zurhausenvirales</taxon>
        <taxon>Papillomaviridae</taxon>
        <taxon>Firstpapillomavirinae</taxon>
        <taxon>Alphapapillomavirus</taxon>
        <taxon>Alphapapillomavirus 8</taxon>
    </lineage>
</organism>
<accession>P36800</accession>
<gene>
    <name evidence="1" type="primary">E6</name>
</gene>
<comment type="function">
    <text evidence="1">Plays a major role in the induction and maintenance of cellular transformation. E6 associates with host UBE3A/E6-AP ubiquitin-protein ligase and modulates its activity. Sequesters tumor suppressor TP53 in the host cytoplasm and modulates its activity by interacting with host EP300 that results in the reduction of TP53 acetylation and activation. In turn, apoptosis induced by DNA damage is inhibited. E6 also protects host keratinocytes from apoptosis by mediating the degradation of host BAK1. May also inhibit host immune response.</text>
</comment>
<comment type="subunit">
    <text evidence="1">Forms homodimers. Interacts with ubiquitin-protein ligase UBE3A/E6-AP; this interaction stimulates UBE3A ubiquitin activity. Interacts with host TP53 and EP300; this interaction inhibits TP53 activity.</text>
</comment>
<comment type="subcellular location">
    <subcellularLocation>
        <location evidence="1">Host cytoplasm</location>
    </subcellularLocation>
    <subcellularLocation>
        <location evidence="1">Host nucleus</location>
    </subcellularLocation>
</comment>
<comment type="miscellaneous">
    <text evidence="1">Belongs to the low risk human alphapapillomavirus family. The cancer-causing human papillomavirus E6 protein has a unique carboxy terminal PDZ domain containing substrate but low risk E6s do not possess this domain.</text>
</comment>
<comment type="similarity">
    <text evidence="2">Belongs to the papillomaviridae E6 protein family.</text>
</comment>
<feature type="chain" id="PRO_0000133327" description="Protein E6">
    <location>
        <begin position="1"/>
        <end position="154"/>
    </location>
</feature>
<feature type="zinc finger region" evidence="1">
    <location>
        <begin position="30"/>
        <end position="66"/>
    </location>
</feature>
<feature type="zinc finger region" evidence="1">
    <location>
        <begin position="103"/>
        <end position="139"/>
    </location>
</feature>
<organismHost>
    <name type="scientific">Homo sapiens</name>
    <name type="common">Human</name>
    <dbReference type="NCBI Taxonomy" id="9606"/>
</organismHost>
<proteinExistence type="inferred from homology"/>
<sequence>MSARCGSTARTLFELCDQCNITLPTLQINCIFCNSILQTAEVLAFAFRELYVVWRNDFPFAACVKCLEFYGKVNQYRNFRYAAYAPTVEEETGLTILEVRIRCCKCHKPLSPVEKTNHIVKKTQFFKLQDSWTGYCLHCWKKCMEKGQRSETSC</sequence>
<dbReference type="EMBL" id="X74463">
    <property type="protein sequence ID" value="CAA52476.1"/>
    <property type="molecule type" value="Genomic_DNA"/>
</dbReference>
<dbReference type="PIR" id="S36584">
    <property type="entry name" value="S36584"/>
</dbReference>
<dbReference type="RefSeq" id="NP_041854.1">
    <property type="nucleotide sequence ID" value="NC_001595.1"/>
</dbReference>
<dbReference type="SMR" id="P36800"/>
<dbReference type="BioGRID" id="3509181">
    <property type="interactions" value="1"/>
</dbReference>
<dbReference type="GeneID" id="1489472"/>
<dbReference type="KEGG" id="vg:1489472"/>
<dbReference type="OrthoDB" id="27353at10239"/>
<dbReference type="Proteomes" id="UP000008226">
    <property type="component" value="Genome"/>
</dbReference>
<dbReference type="GO" id="GO:0030430">
    <property type="term" value="C:host cell cytoplasm"/>
    <property type="evidence" value="ECO:0007669"/>
    <property type="project" value="UniProtKB-SubCell"/>
</dbReference>
<dbReference type="GO" id="GO:0042025">
    <property type="term" value="C:host cell nucleus"/>
    <property type="evidence" value="ECO:0007669"/>
    <property type="project" value="UniProtKB-SubCell"/>
</dbReference>
<dbReference type="GO" id="GO:0003677">
    <property type="term" value="F:DNA binding"/>
    <property type="evidence" value="ECO:0007669"/>
    <property type="project" value="UniProtKB-UniRule"/>
</dbReference>
<dbReference type="GO" id="GO:0008270">
    <property type="term" value="F:zinc ion binding"/>
    <property type="evidence" value="ECO:0007669"/>
    <property type="project" value="UniProtKB-KW"/>
</dbReference>
<dbReference type="GO" id="GO:0006351">
    <property type="term" value="P:DNA-templated transcription"/>
    <property type="evidence" value="ECO:0007669"/>
    <property type="project" value="UniProtKB-UniRule"/>
</dbReference>
<dbReference type="GO" id="GO:0006355">
    <property type="term" value="P:regulation of DNA-templated transcription"/>
    <property type="evidence" value="ECO:0007669"/>
    <property type="project" value="UniProtKB-UniRule"/>
</dbReference>
<dbReference type="GO" id="GO:0052150">
    <property type="term" value="P:symbiont-mediated perturbation of host apoptosis"/>
    <property type="evidence" value="ECO:0007669"/>
    <property type="project" value="UniProtKB-KW"/>
</dbReference>
<dbReference type="GO" id="GO:0039648">
    <property type="term" value="P:symbiont-mediated perturbation of host ubiquitin-like protein modification"/>
    <property type="evidence" value="ECO:0007669"/>
    <property type="project" value="UniProtKB-UniRule"/>
</dbReference>
<dbReference type="GO" id="GO:0052170">
    <property type="term" value="P:symbiont-mediated suppression of host innate immune response"/>
    <property type="evidence" value="ECO:0007669"/>
    <property type="project" value="UniProtKB-KW"/>
</dbReference>
<dbReference type="GO" id="GO:0039502">
    <property type="term" value="P:symbiont-mediated suppression of host type I interferon-mediated signaling pathway"/>
    <property type="evidence" value="ECO:0007669"/>
    <property type="project" value="UniProtKB-UniRule"/>
</dbReference>
<dbReference type="Gene3D" id="3.30.240.40">
    <property type="entry name" value="E6 early regulatory protein"/>
    <property type="match status" value="2"/>
</dbReference>
<dbReference type="HAMAP" id="MF_04006">
    <property type="entry name" value="HPV_E6"/>
    <property type="match status" value="1"/>
</dbReference>
<dbReference type="InterPro" id="IPR001334">
    <property type="entry name" value="E6"/>
</dbReference>
<dbReference type="InterPro" id="IPR038575">
    <property type="entry name" value="E6_sf"/>
</dbReference>
<dbReference type="Pfam" id="PF00518">
    <property type="entry name" value="E6"/>
    <property type="match status" value="1"/>
</dbReference>
<dbReference type="SUPFAM" id="SSF161229">
    <property type="entry name" value="E6 C-terminal domain-like"/>
    <property type="match status" value="2"/>
</dbReference>
<reference key="1">
    <citation type="journal article" date="1994" name="Curr. Top. Microbiol. Immunol.">
        <title>Primer-directed sequencing of human papillomavirus types.</title>
        <authorList>
            <person name="Delius H."/>
            <person name="Hofmann B."/>
        </authorList>
    </citation>
    <scope>NUCLEOTIDE SEQUENCE [GENOMIC DNA]</scope>
</reference>
<name>VE6_HPV07</name>
<evidence type="ECO:0000255" key="1">
    <source>
        <dbReference type="HAMAP-Rule" id="MF_04006"/>
    </source>
</evidence>
<evidence type="ECO:0000305" key="2"/>
<keyword id="KW-0010">Activator</keyword>
<keyword id="KW-0238">DNA-binding</keyword>
<keyword id="KW-0244">Early protein</keyword>
<keyword id="KW-1035">Host cytoplasm</keyword>
<keyword id="KW-1048">Host nucleus</keyword>
<keyword id="KW-0945">Host-virus interaction</keyword>
<keyword id="KW-1090">Inhibition of host innate immune response by virus</keyword>
<keyword id="KW-0479">Metal-binding</keyword>
<keyword id="KW-1119">Modulation of host cell apoptosis by virus</keyword>
<keyword id="KW-1185">Reference proteome</keyword>
<keyword id="KW-0804">Transcription</keyword>
<keyword id="KW-0805">Transcription regulation</keyword>
<keyword id="KW-0899">Viral immunoevasion</keyword>
<keyword id="KW-0862">Zinc</keyword>
<keyword id="KW-0863">Zinc-finger</keyword>